<proteinExistence type="evidence at protein level"/>
<dbReference type="EMBL" id="AC154296">
    <property type="status" value="NOT_ANNOTATED_CDS"/>
    <property type="molecule type" value="Genomic_DNA"/>
</dbReference>
<dbReference type="EMBL" id="AK030838">
    <property type="protein sequence ID" value="BAC27153.1"/>
    <property type="status" value="ALT_INIT"/>
    <property type="molecule type" value="mRNA"/>
</dbReference>
<dbReference type="EMBL" id="AK032664">
    <property type="protein sequence ID" value="BAC27977.1"/>
    <property type="molecule type" value="mRNA"/>
</dbReference>
<dbReference type="EMBL" id="AK051561">
    <property type="protein sequence ID" value="BAC34674.2"/>
    <property type="molecule type" value="mRNA"/>
</dbReference>
<dbReference type="EMBL" id="AK134513">
    <property type="protein sequence ID" value="BAE22166.1"/>
    <property type="molecule type" value="mRNA"/>
</dbReference>
<dbReference type="EMBL" id="AK220270">
    <property type="protein sequence ID" value="BAD90195.1"/>
    <property type="status" value="ALT_INIT"/>
    <property type="molecule type" value="mRNA"/>
</dbReference>
<dbReference type="EMBL" id="BC118968">
    <property type="protein sequence ID" value="AAI18969.1"/>
    <property type="status" value="ALT_INIT"/>
    <property type="molecule type" value="mRNA"/>
</dbReference>
<dbReference type="CCDS" id="CCDS52727.1">
    <molecule id="Q8BQ48-3"/>
</dbReference>
<dbReference type="RefSeq" id="NP_795950.3">
    <molecule id="Q8BQ48-3"/>
    <property type="nucleotide sequence ID" value="NM_176976.5"/>
</dbReference>
<dbReference type="SMR" id="Q8BQ48"/>
<dbReference type="BioGRID" id="235442">
    <property type="interactions" value="6"/>
</dbReference>
<dbReference type="FunCoup" id="Q8BQ48">
    <property type="interactions" value="1215"/>
</dbReference>
<dbReference type="STRING" id="10090.ENSMUSP00000096578"/>
<dbReference type="GlyGen" id="Q8BQ48">
    <property type="glycosylation" value="1 site, 1 O-linked glycan (1 site)"/>
</dbReference>
<dbReference type="iPTMnet" id="Q8BQ48"/>
<dbReference type="PhosphoSitePlus" id="Q8BQ48"/>
<dbReference type="jPOST" id="Q8BQ48"/>
<dbReference type="PaxDb" id="10090-ENSMUSP00000123788"/>
<dbReference type="ProteomicsDB" id="281161">
    <molecule id="Q8BQ48-1"/>
</dbReference>
<dbReference type="ProteomicsDB" id="281162">
    <molecule id="Q8BQ48-2"/>
</dbReference>
<dbReference type="ProteomicsDB" id="281163">
    <molecule id="Q8BQ48-3"/>
</dbReference>
<dbReference type="ProteomicsDB" id="281164">
    <molecule id="Q8BQ48-4"/>
</dbReference>
<dbReference type="ProteomicsDB" id="281165">
    <molecule id="Q8BQ48-5"/>
</dbReference>
<dbReference type="ProteomicsDB" id="281166">
    <molecule id="Q8BQ48-6"/>
</dbReference>
<dbReference type="Ensembl" id="ENSMUST00000098979.12">
    <molecule id="Q8BQ48-3"/>
    <property type="protein sequence ID" value="ENSMUSP00000096578.5"/>
    <property type="gene ID" value="ENSMUSG00000046111.19"/>
</dbReference>
<dbReference type="Ensembl" id="ENSMUST00000161132.10">
    <molecule id="Q8BQ48-1"/>
    <property type="protein sequence ID" value="ENSMUSP00000123788.4"/>
    <property type="gene ID" value="ENSMUSG00000046111.19"/>
</dbReference>
<dbReference type="GeneID" id="319675"/>
<dbReference type="KEGG" id="mmu:319675"/>
<dbReference type="UCSC" id="uc009ofv.2">
    <molecule id="Q8BQ48-4"/>
    <property type="organism name" value="mouse"/>
</dbReference>
<dbReference type="UCSC" id="uc009ofw.3">
    <molecule id="Q8BQ48-1"/>
    <property type="organism name" value="mouse"/>
</dbReference>
<dbReference type="UCSC" id="uc009ofy.2">
    <molecule id="Q8BQ48-6"/>
    <property type="organism name" value="mouse"/>
</dbReference>
<dbReference type="AGR" id="MGI:2442521"/>
<dbReference type="CTD" id="85459"/>
<dbReference type="MGI" id="MGI:2442521">
    <property type="gene designation" value="Cep295"/>
</dbReference>
<dbReference type="eggNOG" id="ENOG502QSZR">
    <property type="taxonomic scope" value="Eukaryota"/>
</dbReference>
<dbReference type="GeneTree" id="ENSGT00940000153123"/>
<dbReference type="HOGENOM" id="CLU_001093_0_0_1"/>
<dbReference type="InParanoid" id="Q8BQ48"/>
<dbReference type="OrthoDB" id="6359887at2759"/>
<dbReference type="PhylomeDB" id="Q8BQ48"/>
<dbReference type="TreeFam" id="TF331536"/>
<dbReference type="BioGRID-ORCS" id="319675">
    <property type="hits" value="4 hits in 77 CRISPR screens"/>
</dbReference>
<dbReference type="ChiTaRS" id="Cep295">
    <property type="organism name" value="mouse"/>
</dbReference>
<dbReference type="PRO" id="PR:Q8BQ48"/>
<dbReference type="Proteomes" id="UP000000589">
    <property type="component" value="Chromosome 9"/>
</dbReference>
<dbReference type="RNAct" id="Q8BQ48">
    <property type="molecule type" value="protein"/>
</dbReference>
<dbReference type="GO" id="GO:0005814">
    <property type="term" value="C:centriole"/>
    <property type="evidence" value="ECO:0000250"/>
    <property type="project" value="UniProtKB"/>
</dbReference>
<dbReference type="GO" id="GO:0005813">
    <property type="term" value="C:centrosome"/>
    <property type="evidence" value="ECO:0000250"/>
    <property type="project" value="UniProtKB"/>
</dbReference>
<dbReference type="GO" id="GO:0005737">
    <property type="term" value="C:cytoplasm"/>
    <property type="evidence" value="ECO:0007669"/>
    <property type="project" value="UniProtKB-KW"/>
</dbReference>
<dbReference type="GO" id="GO:1990498">
    <property type="term" value="C:mitotic spindle microtubule"/>
    <property type="evidence" value="ECO:0000250"/>
    <property type="project" value="UniProtKB"/>
</dbReference>
<dbReference type="GO" id="GO:0008017">
    <property type="term" value="F:microtubule binding"/>
    <property type="evidence" value="ECO:0000250"/>
    <property type="project" value="UniProtKB"/>
</dbReference>
<dbReference type="GO" id="GO:0030030">
    <property type="term" value="P:cell projection organization"/>
    <property type="evidence" value="ECO:0007669"/>
    <property type="project" value="UniProtKB-KW"/>
</dbReference>
<dbReference type="GO" id="GO:0007099">
    <property type="term" value="P:centriole replication"/>
    <property type="evidence" value="ECO:0000250"/>
    <property type="project" value="UniProtKB"/>
</dbReference>
<dbReference type="GO" id="GO:1903724">
    <property type="term" value="P:positive regulation of centriole elongation"/>
    <property type="evidence" value="ECO:0000250"/>
    <property type="project" value="UniProtKB"/>
</dbReference>
<dbReference type="GO" id="GO:0010825">
    <property type="term" value="P:positive regulation of centrosome duplication"/>
    <property type="evidence" value="ECO:0000250"/>
    <property type="project" value="UniProtKB"/>
</dbReference>
<dbReference type="GO" id="GO:1904951">
    <property type="term" value="P:positive regulation of establishment of protein localization"/>
    <property type="evidence" value="ECO:0000250"/>
    <property type="project" value="UniProtKB"/>
</dbReference>
<dbReference type="GO" id="GO:1901985">
    <property type="term" value="P:positive regulation of protein acetylation"/>
    <property type="evidence" value="ECO:0000250"/>
    <property type="project" value="UniProtKB"/>
</dbReference>
<dbReference type="PANTHER" id="PTHR21553">
    <property type="entry name" value="ALMS1-RELATED"/>
    <property type="match status" value="1"/>
</dbReference>
<dbReference type="PANTHER" id="PTHR21553:SF25">
    <property type="entry name" value="CENTROSOMAL PROTEIN OF 295 KDA"/>
    <property type="match status" value="1"/>
</dbReference>
<name>CE295_MOUSE</name>
<reference key="1">
    <citation type="journal article" date="2009" name="PLoS Biol.">
        <title>Lineage-specific biology revealed by a finished genome assembly of the mouse.</title>
        <authorList>
            <person name="Church D.M."/>
            <person name="Goodstadt L."/>
            <person name="Hillier L.W."/>
            <person name="Zody M.C."/>
            <person name="Goldstein S."/>
            <person name="She X."/>
            <person name="Bult C.J."/>
            <person name="Agarwala R."/>
            <person name="Cherry J.L."/>
            <person name="DiCuccio M."/>
            <person name="Hlavina W."/>
            <person name="Kapustin Y."/>
            <person name="Meric P."/>
            <person name="Maglott D."/>
            <person name="Birtle Z."/>
            <person name="Marques A.C."/>
            <person name="Graves T."/>
            <person name="Zhou S."/>
            <person name="Teague B."/>
            <person name="Potamousis K."/>
            <person name="Churas C."/>
            <person name="Place M."/>
            <person name="Herschleb J."/>
            <person name="Runnheim R."/>
            <person name="Forrest D."/>
            <person name="Amos-Landgraf J."/>
            <person name="Schwartz D.C."/>
            <person name="Cheng Z."/>
            <person name="Lindblad-Toh K."/>
            <person name="Eichler E.E."/>
            <person name="Ponting C.P."/>
        </authorList>
    </citation>
    <scope>NUCLEOTIDE SEQUENCE [LARGE SCALE GENOMIC DNA]</scope>
    <source>
        <strain>C57BL/6J</strain>
    </source>
</reference>
<reference key="2">
    <citation type="journal article" date="2005" name="Science">
        <title>The transcriptional landscape of the mammalian genome.</title>
        <authorList>
            <person name="Carninci P."/>
            <person name="Kasukawa T."/>
            <person name="Katayama S."/>
            <person name="Gough J."/>
            <person name="Frith M.C."/>
            <person name="Maeda N."/>
            <person name="Oyama R."/>
            <person name="Ravasi T."/>
            <person name="Lenhard B."/>
            <person name="Wells C."/>
            <person name="Kodzius R."/>
            <person name="Shimokawa K."/>
            <person name="Bajic V.B."/>
            <person name="Brenner S.E."/>
            <person name="Batalov S."/>
            <person name="Forrest A.R."/>
            <person name="Zavolan M."/>
            <person name="Davis M.J."/>
            <person name="Wilming L.G."/>
            <person name="Aidinis V."/>
            <person name="Allen J.E."/>
            <person name="Ambesi-Impiombato A."/>
            <person name="Apweiler R."/>
            <person name="Aturaliya R.N."/>
            <person name="Bailey T.L."/>
            <person name="Bansal M."/>
            <person name="Baxter L."/>
            <person name="Beisel K.W."/>
            <person name="Bersano T."/>
            <person name="Bono H."/>
            <person name="Chalk A.M."/>
            <person name="Chiu K.P."/>
            <person name="Choudhary V."/>
            <person name="Christoffels A."/>
            <person name="Clutterbuck D.R."/>
            <person name="Crowe M.L."/>
            <person name="Dalla E."/>
            <person name="Dalrymple B.P."/>
            <person name="de Bono B."/>
            <person name="Della Gatta G."/>
            <person name="di Bernardo D."/>
            <person name="Down T."/>
            <person name="Engstrom P."/>
            <person name="Fagiolini M."/>
            <person name="Faulkner G."/>
            <person name="Fletcher C.F."/>
            <person name="Fukushima T."/>
            <person name="Furuno M."/>
            <person name="Futaki S."/>
            <person name="Gariboldi M."/>
            <person name="Georgii-Hemming P."/>
            <person name="Gingeras T.R."/>
            <person name="Gojobori T."/>
            <person name="Green R.E."/>
            <person name="Gustincich S."/>
            <person name="Harbers M."/>
            <person name="Hayashi Y."/>
            <person name="Hensch T.K."/>
            <person name="Hirokawa N."/>
            <person name="Hill D."/>
            <person name="Huminiecki L."/>
            <person name="Iacono M."/>
            <person name="Ikeo K."/>
            <person name="Iwama A."/>
            <person name="Ishikawa T."/>
            <person name="Jakt M."/>
            <person name="Kanapin A."/>
            <person name="Katoh M."/>
            <person name="Kawasawa Y."/>
            <person name="Kelso J."/>
            <person name="Kitamura H."/>
            <person name="Kitano H."/>
            <person name="Kollias G."/>
            <person name="Krishnan S.P."/>
            <person name="Kruger A."/>
            <person name="Kummerfeld S.K."/>
            <person name="Kurochkin I.V."/>
            <person name="Lareau L.F."/>
            <person name="Lazarevic D."/>
            <person name="Lipovich L."/>
            <person name="Liu J."/>
            <person name="Liuni S."/>
            <person name="McWilliam S."/>
            <person name="Madan Babu M."/>
            <person name="Madera M."/>
            <person name="Marchionni L."/>
            <person name="Matsuda H."/>
            <person name="Matsuzawa S."/>
            <person name="Miki H."/>
            <person name="Mignone F."/>
            <person name="Miyake S."/>
            <person name="Morris K."/>
            <person name="Mottagui-Tabar S."/>
            <person name="Mulder N."/>
            <person name="Nakano N."/>
            <person name="Nakauchi H."/>
            <person name="Ng P."/>
            <person name="Nilsson R."/>
            <person name="Nishiguchi S."/>
            <person name="Nishikawa S."/>
            <person name="Nori F."/>
            <person name="Ohara O."/>
            <person name="Okazaki Y."/>
            <person name="Orlando V."/>
            <person name="Pang K.C."/>
            <person name="Pavan W.J."/>
            <person name="Pavesi G."/>
            <person name="Pesole G."/>
            <person name="Petrovsky N."/>
            <person name="Piazza S."/>
            <person name="Reed J."/>
            <person name="Reid J.F."/>
            <person name="Ring B.Z."/>
            <person name="Ringwald M."/>
            <person name="Rost B."/>
            <person name="Ruan Y."/>
            <person name="Salzberg S.L."/>
            <person name="Sandelin A."/>
            <person name="Schneider C."/>
            <person name="Schoenbach C."/>
            <person name="Sekiguchi K."/>
            <person name="Semple C.A."/>
            <person name="Seno S."/>
            <person name="Sessa L."/>
            <person name="Sheng Y."/>
            <person name="Shibata Y."/>
            <person name="Shimada H."/>
            <person name="Shimada K."/>
            <person name="Silva D."/>
            <person name="Sinclair B."/>
            <person name="Sperling S."/>
            <person name="Stupka E."/>
            <person name="Sugiura K."/>
            <person name="Sultana R."/>
            <person name="Takenaka Y."/>
            <person name="Taki K."/>
            <person name="Tammoja K."/>
            <person name="Tan S.L."/>
            <person name="Tang S."/>
            <person name="Taylor M.S."/>
            <person name="Tegner J."/>
            <person name="Teichmann S.A."/>
            <person name="Ueda H.R."/>
            <person name="van Nimwegen E."/>
            <person name="Verardo R."/>
            <person name="Wei C.L."/>
            <person name="Yagi K."/>
            <person name="Yamanishi H."/>
            <person name="Zabarovsky E."/>
            <person name="Zhu S."/>
            <person name="Zimmer A."/>
            <person name="Hide W."/>
            <person name="Bult C."/>
            <person name="Grimmond S.M."/>
            <person name="Teasdale R.D."/>
            <person name="Liu E.T."/>
            <person name="Brusic V."/>
            <person name="Quackenbush J."/>
            <person name="Wahlestedt C."/>
            <person name="Mattick J.S."/>
            <person name="Hume D.A."/>
            <person name="Kai C."/>
            <person name="Sasaki D."/>
            <person name="Tomaru Y."/>
            <person name="Fukuda S."/>
            <person name="Kanamori-Katayama M."/>
            <person name="Suzuki M."/>
            <person name="Aoki J."/>
            <person name="Arakawa T."/>
            <person name="Iida J."/>
            <person name="Imamura K."/>
            <person name="Itoh M."/>
            <person name="Kato T."/>
            <person name="Kawaji H."/>
            <person name="Kawagashira N."/>
            <person name="Kawashima T."/>
            <person name="Kojima M."/>
            <person name="Kondo S."/>
            <person name="Konno H."/>
            <person name="Nakano K."/>
            <person name="Ninomiya N."/>
            <person name="Nishio T."/>
            <person name="Okada M."/>
            <person name="Plessy C."/>
            <person name="Shibata K."/>
            <person name="Shiraki T."/>
            <person name="Suzuki S."/>
            <person name="Tagami M."/>
            <person name="Waki K."/>
            <person name="Watahiki A."/>
            <person name="Okamura-Oho Y."/>
            <person name="Suzuki H."/>
            <person name="Kawai J."/>
            <person name="Hayashizaki Y."/>
        </authorList>
    </citation>
    <scope>NUCLEOTIDE SEQUENCE [LARGE SCALE MRNA] OF 1-114 AND 1173-2412 (ISOFORM 2)</scope>
    <scope>NUCLEOTIDE SEQUENCE [LARGE SCALE MRNA] OF 1296-2412 (ISOFORM 6)</scope>
    <scope>NUCLEOTIDE SEQUENCE [LARGE SCALE MRNA] OF 2006-2412 (ISOFORM 5)</scope>
    <source>
        <strain>C57BL/6J</strain>
        <tissue>Cerebellum</tissue>
        <tissue>Head</tissue>
        <tissue>Spinal ganglion</tissue>
        <tissue>Thymus</tissue>
    </source>
</reference>
<reference key="3">
    <citation type="submission" date="2005-02" db="EMBL/GenBank/DDBJ databases">
        <title>Prediction of the coding sequences of mouse homologues of KIAA gene. The complete nucleotide sequences of mouse KIAA-homologous cDNAs identified by screening of terminal sequences of cDNA clones randomly sampled from size-fractionated libraries.</title>
        <authorList>
            <person name="Okazaki N."/>
            <person name="Kikuno R.F."/>
            <person name="Ohara R."/>
            <person name="Inamoto S."/>
            <person name="Nagase T."/>
            <person name="Ohara O."/>
            <person name="Koga H."/>
        </authorList>
    </citation>
    <scope>NUCLEOTIDE SEQUENCE [LARGE SCALE MRNA] OF 317-2412 (ISOFORM 4)</scope>
    <source>
        <tissue>Pancreatic islet</tissue>
    </source>
</reference>
<reference key="4">
    <citation type="journal article" date="2004" name="Genome Res.">
        <title>The status, quality, and expansion of the NIH full-length cDNA project: the Mammalian Gene Collection (MGC).</title>
        <authorList>
            <consortium name="The MGC Project Team"/>
        </authorList>
    </citation>
    <scope>NUCLEOTIDE SEQUENCE [LARGE SCALE MRNA] OF 1251-2412 (ISOFORM 3)</scope>
</reference>
<reference key="5">
    <citation type="journal article" date="2010" name="Cell">
        <title>A tissue-specific atlas of mouse protein phosphorylation and expression.</title>
        <authorList>
            <person name="Huttlin E.L."/>
            <person name="Jedrychowski M.P."/>
            <person name="Elias J.E."/>
            <person name="Goswami T."/>
            <person name="Rad R."/>
            <person name="Beausoleil S.A."/>
            <person name="Villen J."/>
            <person name="Haas W."/>
            <person name="Sowa M.E."/>
            <person name="Gygi S.P."/>
        </authorList>
    </citation>
    <scope>IDENTIFICATION BY MASS SPECTROMETRY [LARGE SCALE ANALYSIS]</scope>
    <source>
        <tissue>Testis</tissue>
    </source>
</reference>
<sequence>MKRKGMNTKLRLSPSEEAFILKEDYERRRKLRLLQVREQERGIAFQIREGIKQRRSQQVSHLAEELRAKWEEAQSQKIQNLEKLYLASLRHMGDGHRQAKENEPDLDALSRRAAERKRKAEVRHKEALKVQKNQKEMLMKQKTRHIKARKEAVLVEKQRSAKMARLPPPVPSPFENIDVNRIPSLKTNSSTYHHISTFVSRQMGTKQPDAHLAAEEEARRVERLRKQAAQERVKQFERAHVRGSQAMKKIHLAQNQERLMEELKQLQKEDLARRRQTVAQMPPQMLELPYRRSEMKEDRQRELEFAFEDMYNADRKVKGNLILHLKPEPLPTISDQLQDEELDLSMEQENQVPLAAKIQQIPSRILFKRLLNKIRSQKSLWTIKSVSEDEGEVTSSIIEIESKVPSVDSGAIITEERTAASFEQEQVTDSDRLTIESGPLSSEDKPLYYKAGTGREQAMAVSPPATAVAQSSVLLHPQEEAVRIRMSLRRKQIMEIEEQKQKQLELLEQIEQQKLRLETDCFRAQLEEQRKQADQPEVCCAPMSHAMISDEDSHRQMIRNYQHQLLQQNRLHKETVETARKRLLEYQTVLKERSPSLSASALVPDSVVSGPPQQSYKPAAASDSWDPSQRLKLSPSKYQPVQPSQIPALEQSHIQVPRHGHITQRQGKMAVSEMLGKQPVESQERQWQFSQVETHQGDYEFVLKDSHSLSRTLSYVRPQTLQDAREVSKPPRVIICQSLDSQQISSEDSENISSKPSEPSPFLPLVPERPFTSLPVKFHSGTIHKPFTTINQSVISQMHDQPLSSSETITAQQGDLRFLQEQLELQKKVLQARQEAREKLLLCTQKELGQQTGLPVFLPSPAGNIFSSLPSASAESGNFQTSSTKSDATVSSDNMDRLWDSSQPISSQQTHLEFLQEQSSVETDNLQARREAQEVLFAHTQNTLEKIVRSEQAGSSLPHQVAQQSFSSLTLADTQSKKIQKQPLPANKKGLLPSQSEVSKAQDGSSGFLQQTLPLQNTLKLLQEQLTRQRSMIPPRRDGQETLLLYKESCSEDSEAGPVESLSSVVVQHADASRAVSEVPKRLQDVYSSEEENRVLSSHLITHGFPQHSLQRQEHFTPLQEETHIQRLILGARKNNEEFAPKQNELEKGLCSQQTDALSSPSQVTDWGTSRGSVSVRSDRTDPLRHFKIPAFRERLVRVSQHTFPLQDNLQEHQEWVDTEKESFQSSPLTPENPSSQQTGFSSFKASLRLPSCVSLPSADSGITQHPLSTESDSKVKSSHLQIPELQHRLSKISQLIPPQQDSLKALQEQLATQREAIIHSRQEAHEETLREWKEKIFPEQVGPFSPLIPQHSLASFPVSDTERAQELCSTNSDTISSGYPEMLELPDRTLGLSHTALPQQNNLTAHPEHLHAQTNFFHSTEKAQEGLVFPRPCQFEEMSAEHFIQPQHDDLKALQQQLDMQREAIRSGQEMQEKMLLQRLNKLEQRISSKQISSSLFSSQVALPIANSDGTLQSFPTKSNETELLGSQDEYLSFSQPRLPLQNNMTEQLDLEKVFHKELLLHKQKSQNKSESSEHSLPPLFLSKEIEHPFISLPFAESKSKSICELYLSDKKHAAPNDAVIPRLQDRLLSCSQPVLTQQDNMSLQKQLNLQRETLHSRQKAQEELLVQRQTSLQQQIQRHRETLKNFFNVSQARNPTDENDLEMQKREQLGGWFPHTQGLTWGDAGQGSANGEQPRADVHAEHNGESLAKELSGRASKPPVSKVKCVLDLNQHELSTIQEVESPASGRISMPGKAEFYQDRDPLRVSVSREQSFLESPLAHDPFGCHQPPAQENSKSHDDNAEAVKVKKSDVEDHAVLSHAVSKEEACTNLGPLGKPDDEAETQEISQEPLSSVTVSTGSFLSYEITDLSLTDPESFSEQTEHLEQESTNKQEETDPLSIAVPSVIYQQQHSLGAHNSLLPMEEESTSDHTHVQQIMDNDVNEANLIPDKRDFQVPAVDLDFRELEHIFPHLHRQLFKPLEPHLDFDLSSPGTSQEDSDFYQSSESSSEKHVKALSTGTICFPALTAKSHSPNPRLNQLDINLAHATTEGSEQSFQQLRPEFSSQESQHADLPSIYSIEARGPSQRMENQNYSEMLQNKKKSLSLQPSTEDLTPACSSSDTALFDQLHLQHSTPCASVSSECSVKLLESREEVLGFEELSRRAVTMSQRLTEDENVVLPINPHVGRVEKEASVQGSNPLSIQNEKPIQNFIETDTTEAVGNVCQLAQAEHILKSCPFRSPIPIWETDTGYGIMEEPDLTLVSNSDISITETDLANLTLEDREDNEAQFFQAGVVLPTSSMETSVCGAVSEPYVDQPTVAPSATSGSLQEAFMTRQTLTERSYQRQREIWNKTRLPQTKVSKEKLPTGCTGS</sequence>
<feature type="chain" id="PRO_0000324596" description="Centrosomal protein of 295 kDa">
    <location>
        <begin position="1"/>
        <end position="2412"/>
    </location>
</feature>
<feature type="region of interest" description="Necessary for centriole targeting and microtubule association" evidence="1">
    <location>
        <begin position="1"/>
        <end position="540"/>
    </location>
</feature>
<feature type="region of interest" description="Disordered" evidence="3">
    <location>
        <begin position="600"/>
        <end position="641"/>
    </location>
</feature>
<feature type="region of interest" description="Disordered" evidence="3">
    <location>
        <begin position="739"/>
        <end position="762"/>
    </location>
</feature>
<feature type="region of interest" description="Disordered" evidence="3">
    <location>
        <begin position="871"/>
        <end position="891"/>
    </location>
</feature>
<feature type="region of interest" description="Disordered" evidence="3">
    <location>
        <begin position="973"/>
        <end position="1005"/>
    </location>
</feature>
<feature type="region of interest" description="Disordered" evidence="3">
    <location>
        <begin position="1158"/>
        <end position="1178"/>
    </location>
</feature>
<feature type="region of interest" description="Disordered" evidence="3">
    <location>
        <begin position="1216"/>
        <end position="1240"/>
    </location>
</feature>
<feature type="region of interest" description="Disordered" evidence="3">
    <location>
        <begin position="1820"/>
        <end position="1895"/>
    </location>
</feature>
<feature type="region of interest" description="Disordered" evidence="3">
    <location>
        <begin position="1916"/>
        <end position="1937"/>
    </location>
</feature>
<feature type="region of interest" description="Disordered" evidence="3">
    <location>
        <begin position="2028"/>
        <end position="2048"/>
    </location>
</feature>
<feature type="region of interest" description="Disordered" evidence="3">
    <location>
        <begin position="2089"/>
        <end position="2111"/>
    </location>
</feature>
<feature type="region of interest" description="ALMS motif">
    <location>
        <begin position="2367"/>
        <end position="2412"/>
    </location>
</feature>
<feature type="coiled-coil region" evidence="2">
    <location>
        <begin position="63"/>
        <end position="84"/>
    </location>
</feature>
<feature type="coiled-coil region" evidence="2">
    <location>
        <begin position="114"/>
        <end position="134"/>
    </location>
</feature>
<feature type="coiled-coil region" evidence="2">
    <location>
        <begin position="209"/>
        <end position="273"/>
    </location>
</feature>
<feature type="coiled-coil region" evidence="2">
    <location>
        <begin position="489"/>
        <end position="535"/>
    </location>
</feature>
<feature type="coiled-coil region" evidence="2">
    <location>
        <begin position="563"/>
        <end position="592"/>
    </location>
</feature>
<feature type="coiled-coil region" evidence="2">
    <location>
        <begin position="811"/>
        <end position="841"/>
    </location>
</feature>
<feature type="coiled-coil region" evidence="2">
    <location>
        <begin position="1300"/>
        <end position="1327"/>
    </location>
</feature>
<feature type="coiled-coil region" evidence="2">
    <location>
        <begin position="1448"/>
        <end position="1493"/>
    </location>
</feature>
<feature type="compositionally biased region" description="Polar residues" evidence="3">
    <location>
        <begin position="739"/>
        <end position="757"/>
    </location>
</feature>
<feature type="compositionally biased region" description="Polar residues" evidence="3">
    <location>
        <begin position="993"/>
        <end position="1005"/>
    </location>
</feature>
<feature type="compositionally biased region" description="Polar residues" evidence="3">
    <location>
        <begin position="1158"/>
        <end position="1176"/>
    </location>
</feature>
<feature type="compositionally biased region" description="Polar residues" evidence="3">
    <location>
        <begin position="1224"/>
        <end position="1240"/>
    </location>
</feature>
<feature type="compositionally biased region" description="Basic and acidic residues" evidence="3">
    <location>
        <begin position="1836"/>
        <end position="1868"/>
    </location>
</feature>
<feature type="compositionally biased region" description="Polar residues" evidence="3">
    <location>
        <begin position="1885"/>
        <end position="1895"/>
    </location>
</feature>
<feature type="compositionally biased region" description="Basic and acidic residues" evidence="3">
    <location>
        <begin position="1921"/>
        <end position="1935"/>
    </location>
</feature>
<feature type="compositionally biased region" description="Polar residues" evidence="3">
    <location>
        <begin position="2089"/>
        <end position="2108"/>
    </location>
</feature>
<feature type="modified residue" description="Phosphoserine" evidence="1">
    <location>
        <position position="13"/>
    </location>
</feature>
<feature type="modified residue" description="Phosphoserine" evidence="1">
    <location>
        <position position="634"/>
    </location>
</feature>
<feature type="modified residue" description="Phosphoserine" evidence="1">
    <location>
        <position position="1573"/>
    </location>
</feature>
<feature type="splice variant" id="VSP_032292" description="In isoform 4." evidence="6">
    <location>
        <begin position="655"/>
        <end position="1237"/>
    </location>
</feature>
<feature type="splice variant" id="VSP_032293" description="In isoform 4." evidence="6">
    <location>
        <begin position="1341"/>
        <end position="1692"/>
    </location>
</feature>
<feature type="splice variant" id="VSP_032294" description="In isoform 3, isoform 4 and isoform 6." evidence="4 5 6">
    <location>
        <begin position="1916"/>
        <end position="1995"/>
    </location>
</feature>
<feature type="splice variant" id="VSP_032295" description="In isoform 5." evidence="5">
    <original>Y</original>
    <variation>YQ</variation>
    <location>
        <position position="2042"/>
    </location>
</feature>
<feature type="splice variant" id="VSP_032296" description="In isoform 5 and isoform 6." evidence="5">
    <original>ET</original>
    <variation>VS</variation>
    <location>
        <begin position="2286"/>
        <end position="2287"/>
    </location>
</feature>
<feature type="splice variant" id="VSP_032297" description="In isoform 5 and isoform 6." evidence="5">
    <location>
        <begin position="2288"/>
        <end position="2412"/>
    </location>
</feature>
<feature type="splice variant" id="VSP_032298" description="In isoform 2." evidence="5">
    <original>ATSGSLQEAFMTRQTLTERSYQRQREIWNKTRLPQTKVSKEKLPTGCTGS</original>
    <variation>GKPLISLRTLSTHVGMKATHNFSQIL</variation>
    <location>
        <begin position="2363"/>
        <end position="2412"/>
    </location>
</feature>
<feature type="sequence conflict" description="In Ref. 2; BAC27977." evidence="7" ref="2">
    <original>P</original>
    <variation>T</variation>
    <location>
        <position position="1344"/>
    </location>
</feature>
<feature type="sequence conflict" description="In Ref. 2; BAC27977." evidence="7" ref="2">
    <original>L</original>
    <variation>M</variation>
    <location>
        <position position="1872"/>
    </location>
</feature>
<feature type="sequence conflict" description="In Ref. 2; BAC27153." evidence="7" ref="2">
    <original>H</original>
    <variation>R</variation>
    <location>
        <position position="1924"/>
    </location>
</feature>
<keyword id="KW-0025">Alternative splicing</keyword>
<keyword id="KW-0970">Cilium biogenesis/degradation</keyword>
<keyword id="KW-0175">Coiled coil</keyword>
<keyword id="KW-0963">Cytoplasm</keyword>
<keyword id="KW-0206">Cytoskeleton</keyword>
<keyword id="KW-0597">Phosphoprotein</keyword>
<keyword id="KW-1185">Reference proteome</keyword>
<organism>
    <name type="scientific">Mus musculus</name>
    <name type="common">Mouse</name>
    <dbReference type="NCBI Taxonomy" id="10090"/>
    <lineage>
        <taxon>Eukaryota</taxon>
        <taxon>Metazoa</taxon>
        <taxon>Chordata</taxon>
        <taxon>Craniata</taxon>
        <taxon>Vertebrata</taxon>
        <taxon>Euteleostomi</taxon>
        <taxon>Mammalia</taxon>
        <taxon>Eutheria</taxon>
        <taxon>Euarchontoglires</taxon>
        <taxon>Glires</taxon>
        <taxon>Rodentia</taxon>
        <taxon>Myomorpha</taxon>
        <taxon>Muroidea</taxon>
        <taxon>Muridae</taxon>
        <taxon>Murinae</taxon>
        <taxon>Mus</taxon>
        <taxon>Mus</taxon>
    </lineage>
</organism>
<gene>
    <name evidence="1" type="primary">Cep295</name>
    <name evidence="1" type="synonym">Kiaa1731</name>
</gene>
<protein>
    <recommendedName>
        <fullName evidence="7">Centrosomal protein of 295 kDa</fullName>
    </recommendedName>
</protein>
<evidence type="ECO:0000250" key="1">
    <source>
        <dbReference type="UniProtKB" id="Q9C0D2"/>
    </source>
</evidence>
<evidence type="ECO:0000255" key="2"/>
<evidence type="ECO:0000256" key="3">
    <source>
        <dbReference type="SAM" id="MobiDB-lite"/>
    </source>
</evidence>
<evidence type="ECO:0000303" key="4">
    <source>
    </source>
</evidence>
<evidence type="ECO:0000303" key="5">
    <source>
    </source>
</evidence>
<evidence type="ECO:0000303" key="6">
    <source ref="3"/>
</evidence>
<evidence type="ECO:0000305" key="7"/>
<accession>Q8BQ48</accession>
<accession>Q0VF60</accession>
<accession>Q3UYP6</accession>
<accession>Q571B9</accession>
<accession>Q8CCJ2</accession>
<accession>Q8CDA9</accession>
<comment type="function">
    <text evidence="1">Centriole-enriched microtubule-binding protein involved in centriole biogenesis. Essential for the generation of the distal portion of new-born centrioles in a CPAP- and CEP120-mediated elongation dependent manner during the cell cycle S/G2 phase after formation of the initiating cartwheel structure. Required for the recruitment of centriolar proteins, such as POC1B, POC5 and CEP135, into the distal portion of centrioles. Also required for centriole-to-centrosome conversion during mitotic progression, but is dispensable for cartwheel removal or centriole disengagement. Binds to and stabilizes centriolar microtubule. May be involved in ciliogenesis.</text>
</comment>
<comment type="subunit">
    <text evidence="1">Interacts (via ALMS motif) with microtubules; this interaction is direct.</text>
</comment>
<comment type="subcellular location">
    <subcellularLocation>
        <location evidence="1">Cytoplasm</location>
        <location evidence="1">Cytoskeleton</location>
        <location evidence="1">Microtubule organizing center</location>
        <location evidence="1">Centrosome</location>
        <location evidence="1">Centriole</location>
    </subcellularLocation>
    <subcellularLocation>
        <location evidence="1">Cytoplasm</location>
        <location evidence="1">Cytoskeleton</location>
        <location evidence="1">Microtubule organizing center</location>
        <location evidence="1">Centrosome</location>
    </subcellularLocation>
    <subcellularLocation>
        <location evidence="1">Cytoplasm</location>
        <location evidence="1">Cytoskeleton</location>
        <location evidence="1">Spindle</location>
    </subcellularLocation>
    <subcellularLocation>
        <location evidence="1">Cytoplasm</location>
        <location evidence="1">Cytoskeleton</location>
    </subcellularLocation>
    <text evidence="1">Associates with both of the converted centrioles during G1 but becomes more enriched at the newly formed daughter (or unconverted) centrioles during S, G2, and early M phases. In early S phase, localized at the procentriolar microtubule wall and enriched at the proximal ends of the centrioles in CPAP- and CEP135-dependent manner. Colocalizes with SASS6 and CEP250 proteins. Colocalizes with CEP135 and CEP192 at the centrosomes. Associates with interphase microtubules and mitotic spindles. Colocalizes with centriolar acetylated tubulin.</text>
</comment>
<comment type="alternative products">
    <event type="alternative splicing"/>
    <isoform>
        <id>Q8BQ48-1</id>
        <name>1</name>
        <sequence type="displayed"/>
    </isoform>
    <isoform>
        <id>Q8BQ48-2</id>
        <name>2</name>
        <sequence type="described" ref="VSP_032298"/>
    </isoform>
    <isoform>
        <id>Q8BQ48-3</id>
        <name>3</name>
        <sequence type="described" ref="VSP_032294"/>
    </isoform>
    <isoform>
        <id>Q8BQ48-4</id>
        <name>4</name>
        <sequence type="described" ref="VSP_032292 VSP_032293 VSP_032294"/>
    </isoform>
    <isoform>
        <id>Q8BQ48-5</id>
        <name>5</name>
        <sequence type="described" ref="VSP_032295 VSP_032296 VSP_032297"/>
    </isoform>
    <isoform>
        <id>Q8BQ48-6</id>
        <name>6</name>
        <sequence type="described" ref="VSP_032294 VSP_032296 VSP_032297"/>
    </isoform>
</comment>
<comment type="domain">
    <text evidence="1">The N-terminal and the ALMS motif-containing C-terminal regions are essential for CEP295-mediated centriole elongation.</text>
</comment>
<comment type="sequence caution" evidence="7">
    <conflict type="erroneous initiation">
        <sequence resource="EMBL-CDS" id="AAI18969"/>
    </conflict>
    <text>Truncated N-terminus.</text>
</comment>
<comment type="sequence caution" evidence="7">
    <conflict type="erroneous initiation">
        <sequence resource="EMBL-CDS" id="BAC27153"/>
    </conflict>
    <text>Truncated N-terminus.</text>
</comment>
<comment type="sequence caution" evidence="7">
    <conflict type="erroneous initiation">
        <sequence resource="EMBL-CDS" id="BAD90195"/>
    </conflict>
    <text>Truncated N-terminus.</text>
</comment>